<proteinExistence type="inferred from homology"/>
<protein>
    <recommendedName>
        <fullName evidence="1">Tetrahydromethanopterin S-methyltransferase subunit B</fullName>
        <ecNumber evidence="1">7.2.1.4</ecNumber>
    </recommendedName>
    <alternativeName>
        <fullName evidence="1">N5-methyltetrahydromethanopterin--coenzyme M methyltransferase subunit B</fullName>
    </alternativeName>
</protein>
<dbReference type="EC" id="7.2.1.4" evidence="1"/>
<dbReference type="EMBL" id="BX950229">
    <property type="protein sequence ID" value="CAF31119.1"/>
    <property type="molecule type" value="Genomic_DNA"/>
</dbReference>
<dbReference type="RefSeq" id="WP_011171507.1">
    <property type="nucleotide sequence ID" value="NC_005791.1"/>
</dbReference>
<dbReference type="SMR" id="Q6LWZ1"/>
<dbReference type="STRING" id="267377.MMP1563"/>
<dbReference type="EnsemblBacteria" id="CAF31119">
    <property type="protein sequence ID" value="CAF31119"/>
    <property type="gene ID" value="MMP1563"/>
</dbReference>
<dbReference type="KEGG" id="mmp:MMP1563"/>
<dbReference type="PATRIC" id="fig|267377.15.peg.1601"/>
<dbReference type="eggNOG" id="arCOG04867">
    <property type="taxonomic scope" value="Archaea"/>
</dbReference>
<dbReference type="HOGENOM" id="CLU_171544_0_0_2"/>
<dbReference type="OrthoDB" id="114034at2157"/>
<dbReference type="UniPathway" id="UPA00640">
    <property type="reaction ID" value="UER00698"/>
</dbReference>
<dbReference type="Proteomes" id="UP000000590">
    <property type="component" value="Chromosome"/>
</dbReference>
<dbReference type="GO" id="GO:0005886">
    <property type="term" value="C:plasma membrane"/>
    <property type="evidence" value="ECO:0007669"/>
    <property type="project" value="UniProtKB-SubCell"/>
</dbReference>
<dbReference type="GO" id="GO:0030269">
    <property type="term" value="F:tetrahydromethanopterin S-methyltransferase activity"/>
    <property type="evidence" value="ECO:0007669"/>
    <property type="project" value="UniProtKB-UniRule"/>
</dbReference>
<dbReference type="GO" id="GO:0019386">
    <property type="term" value="P:methanogenesis, from carbon dioxide"/>
    <property type="evidence" value="ECO:0007669"/>
    <property type="project" value="UniProtKB-UniRule"/>
</dbReference>
<dbReference type="GO" id="GO:0032259">
    <property type="term" value="P:methylation"/>
    <property type="evidence" value="ECO:0007669"/>
    <property type="project" value="UniProtKB-KW"/>
</dbReference>
<dbReference type="GO" id="GO:0006730">
    <property type="term" value="P:one-carbon metabolic process"/>
    <property type="evidence" value="ECO:0007669"/>
    <property type="project" value="UniProtKB-UniRule"/>
</dbReference>
<dbReference type="HAMAP" id="MF_01094">
    <property type="entry name" value="MtrB"/>
    <property type="match status" value="1"/>
</dbReference>
<dbReference type="InterPro" id="IPR008690">
    <property type="entry name" value="MtrB_MeTrfase"/>
</dbReference>
<dbReference type="NCBIfam" id="TIGR04166">
    <property type="entry name" value="methano_MtrB"/>
    <property type="match status" value="1"/>
</dbReference>
<dbReference type="NCBIfam" id="NF002129">
    <property type="entry name" value="PRK00965.1"/>
    <property type="match status" value="1"/>
</dbReference>
<dbReference type="Pfam" id="PF05440">
    <property type="entry name" value="MtrB"/>
    <property type="match status" value="1"/>
</dbReference>
<dbReference type="PIRSF" id="PIRSF005518">
    <property type="entry name" value="MtrB"/>
    <property type="match status" value="1"/>
</dbReference>
<feature type="chain" id="PRO_0000147517" description="Tetrahydromethanopterin S-methyltransferase subunit B">
    <location>
        <begin position="1"/>
        <end position="108"/>
    </location>
</feature>
<feature type="transmembrane region" description="Helical" evidence="1">
    <location>
        <begin position="77"/>
        <end position="99"/>
    </location>
</feature>
<accession>Q6LWZ1</accession>
<reference key="1">
    <citation type="journal article" date="2004" name="J. Bacteriol.">
        <title>Complete genome sequence of the genetically tractable hydrogenotrophic methanogen Methanococcus maripaludis.</title>
        <authorList>
            <person name="Hendrickson E.L."/>
            <person name="Kaul R."/>
            <person name="Zhou Y."/>
            <person name="Bovee D."/>
            <person name="Chapman P."/>
            <person name="Chung J."/>
            <person name="Conway de Macario E."/>
            <person name="Dodsworth J.A."/>
            <person name="Gillett W."/>
            <person name="Graham D.E."/>
            <person name="Hackett M."/>
            <person name="Haydock A.K."/>
            <person name="Kang A."/>
            <person name="Land M.L."/>
            <person name="Levy R."/>
            <person name="Lie T.J."/>
            <person name="Major T.A."/>
            <person name="Moore B.C."/>
            <person name="Porat I."/>
            <person name="Palmeiri A."/>
            <person name="Rouse G."/>
            <person name="Saenphimmachak C."/>
            <person name="Soell D."/>
            <person name="Van Dien S."/>
            <person name="Wang T."/>
            <person name="Whitman W.B."/>
            <person name="Xia Q."/>
            <person name="Zhang Y."/>
            <person name="Larimer F.W."/>
            <person name="Olson M.V."/>
            <person name="Leigh J.A."/>
        </authorList>
    </citation>
    <scope>NUCLEOTIDE SEQUENCE [LARGE SCALE GENOMIC DNA]</scope>
    <source>
        <strain>DSM 14266 / JCM 13030 / NBRC 101832 / S2 / LL</strain>
    </source>
</reference>
<name>MTRB_METMP</name>
<gene>
    <name evidence="1" type="primary">mtrB</name>
    <name type="ordered locus">MMP1563</name>
</gene>
<keyword id="KW-1003">Cell membrane</keyword>
<keyword id="KW-0472">Membrane</keyword>
<keyword id="KW-0484">Methanogenesis</keyword>
<keyword id="KW-0489">Methyltransferase</keyword>
<keyword id="KW-0554">One-carbon metabolism</keyword>
<keyword id="KW-1185">Reference proteome</keyword>
<keyword id="KW-0808">Transferase</keyword>
<keyword id="KW-1278">Translocase</keyword>
<keyword id="KW-0812">Transmembrane</keyword>
<keyword id="KW-1133">Transmembrane helix</keyword>
<evidence type="ECO:0000255" key="1">
    <source>
        <dbReference type="HAMAP-Rule" id="MF_01094"/>
    </source>
</evidence>
<sequence length="108" mass="12027">MDIVKVCPELHIVMDVDSGLIAEMRKDILVVDLHPVEDEINKLAQYAKALENSLDPRNTPMKAYAGREGTYKLAGMFQGMFFGFWVTMAVLVLVTILAVKMNLSLIGL</sequence>
<organism>
    <name type="scientific">Methanococcus maripaludis (strain DSM 14266 / JCM 13030 / NBRC 101832 / S2 / LL)</name>
    <dbReference type="NCBI Taxonomy" id="267377"/>
    <lineage>
        <taxon>Archaea</taxon>
        <taxon>Methanobacteriati</taxon>
        <taxon>Methanobacteriota</taxon>
        <taxon>Methanomada group</taxon>
        <taxon>Methanococci</taxon>
        <taxon>Methanococcales</taxon>
        <taxon>Methanococcaceae</taxon>
        <taxon>Methanococcus</taxon>
    </lineage>
</organism>
<comment type="function">
    <text evidence="1">Part of a complex that catalyzes the formation of methyl-coenzyme M and tetrahydromethanopterin from coenzyme M and methyl-tetrahydromethanopterin. This is an energy-conserving, sodium-ion translocating step.</text>
</comment>
<comment type="catalytic activity">
    <reaction evidence="1">
        <text>5-methyl-5,6,7,8-tetrahydromethanopterin + coenzyme M + 2 Na(+)(in) = 5,6,7,8-tetrahydromethanopterin + methyl-coenzyme M + 2 Na(+)(out)</text>
        <dbReference type="Rhea" id="RHEA:53492"/>
        <dbReference type="ChEBI" id="CHEBI:29101"/>
        <dbReference type="ChEBI" id="CHEBI:58103"/>
        <dbReference type="ChEBI" id="CHEBI:58116"/>
        <dbReference type="ChEBI" id="CHEBI:58286"/>
        <dbReference type="ChEBI" id="CHEBI:58319"/>
        <dbReference type="EC" id="7.2.1.4"/>
    </reaction>
</comment>
<comment type="pathway">
    <text evidence="1">One-carbon metabolism; methanogenesis from CO(2); methyl-coenzyme M from 5,10-methylene-5,6,7,8-tetrahydromethanopterin: step 2/2.</text>
</comment>
<comment type="subunit">
    <text evidence="1">The complex is composed of 8 subunits; MtrA, MtrB, MtrC, MtrD, MtrE, MtrF, MtrG and MtrH.</text>
</comment>
<comment type="subcellular location">
    <subcellularLocation>
        <location evidence="1">Cell membrane</location>
        <topology evidence="1">Single-pass membrane protein</topology>
    </subcellularLocation>
</comment>
<comment type="similarity">
    <text evidence="1">Belongs to the MtrB family.</text>
</comment>